<sequence length="187" mass="20057">MSKSASRARLADIIRARSFGRGEITLASGRKSDFYFNLKPTMLDPEGAALLAELTFEALREDNVDYIGGLEMGAVPLAGAIAQLSWLKNHPIAAFFVRKKPKEHGARLSVEGLSKTETLQGKRVVIVEDVTTTGGSAIKAAESVREAGGVIVLVLTMVDREEGATEAFAAAGLPFRSLYKASEFLKS</sequence>
<keyword id="KW-0328">Glycosyltransferase</keyword>
<keyword id="KW-0460">Magnesium</keyword>
<keyword id="KW-0665">Pyrimidine biosynthesis</keyword>
<keyword id="KW-0808">Transferase</keyword>
<dbReference type="EC" id="2.4.2.10" evidence="1"/>
<dbReference type="EMBL" id="CP000301">
    <property type="protein sequence ID" value="ABD90380.1"/>
    <property type="molecule type" value="Genomic_DNA"/>
</dbReference>
<dbReference type="SMR" id="Q20WV6"/>
<dbReference type="STRING" id="316056.RPC_4858"/>
<dbReference type="KEGG" id="rpc:RPC_4858"/>
<dbReference type="eggNOG" id="COG0461">
    <property type="taxonomic scope" value="Bacteria"/>
</dbReference>
<dbReference type="HOGENOM" id="CLU_074878_2_1_5"/>
<dbReference type="OrthoDB" id="9779060at2"/>
<dbReference type="UniPathway" id="UPA00070">
    <property type="reaction ID" value="UER00119"/>
</dbReference>
<dbReference type="GO" id="GO:0000287">
    <property type="term" value="F:magnesium ion binding"/>
    <property type="evidence" value="ECO:0007669"/>
    <property type="project" value="UniProtKB-UniRule"/>
</dbReference>
<dbReference type="GO" id="GO:0004588">
    <property type="term" value="F:orotate phosphoribosyltransferase activity"/>
    <property type="evidence" value="ECO:0007669"/>
    <property type="project" value="UniProtKB-UniRule"/>
</dbReference>
<dbReference type="GO" id="GO:0044205">
    <property type="term" value="P:'de novo' UMP biosynthetic process"/>
    <property type="evidence" value="ECO:0007669"/>
    <property type="project" value="UniProtKB-UniRule"/>
</dbReference>
<dbReference type="GO" id="GO:0019856">
    <property type="term" value="P:pyrimidine nucleobase biosynthetic process"/>
    <property type="evidence" value="ECO:0007669"/>
    <property type="project" value="TreeGrafter"/>
</dbReference>
<dbReference type="CDD" id="cd06223">
    <property type="entry name" value="PRTases_typeI"/>
    <property type="match status" value="1"/>
</dbReference>
<dbReference type="Gene3D" id="3.40.50.2020">
    <property type="match status" value="1"/>
</dbReference>
<dbReference type="HAMAP" id="MF_01208">
    <property type="entry name" value="PyrE"/>
    <property type="match status" value="1"/>
</dbReference>
<dbReference type="InterPro" id="IPR023031">
    <property type="entry name" value="OPRT"/>
</dbReference>
<dbReference type="InterPro" id="IPR004467">
    <property type="entry name" value="Or_phspho_trans_dom"/>
</dbReference>
<dbReference type="InterPro" id="IPR000836">
    <property type="entry name" value="PRibTrfase_dom"/>
</dbReference>
<dbReference type="InterPro" id="IPR029057">
    <property type="entry name" value="PRTase-like"/>
</dbReference>
<dbReference type="NCBIfam" id="TIGR00336">
    <property type="entry name" value="pyrE"/>
    <property type="match status" value="1"/>
</dbReference>
<dbReference type="PANTHER" id="PTHR19278">
    <property type="entry name" value="OROTATE PHOSPHORIBOSYLTRANSFERASE"/>
    <property type="match status" value="1"/>
</dbReference>
<dbReference type="PANTHER" id="PTHR19278:SF9">
    <property type="entry name" value="URIDINE 5'-MONOPHOSPHATE SYNTHASE"/>
    <property type="match status" value="1"/>
</dbReference>
<dbReference type="Pfam" id="PF00156">
    <property type="entry name" value="Pribosyltran"/>
    <property type="match status" value="1"/>
</dbReference>
<dbReference type="SUPFAM" id="SSF53271">
    <property type="entry name" value="PRTase-like"/>
    <property type="match status" value="1"/>
</dbReference>
<feature type="chain" id="PRO_1000066284" description="Orotate phosphoribosyltransferase">
    <location>
        <begin position="1"/>
        <end position="187"/>
    </location>
</feature>
<feature type="binding site" evidence="1">
    <location>
        <position position="98"/>
    </location>
    <ligand>
        <name>5-phospho-alpha-D-ribose 1-diphosphate</name>
        <dbReference type="ChEBI" id="CHEBI:58017"/>
        <note>ligand shared between dimeric partners</note>
    </ligand>
</feature>
<feature type="binding site" description="in other chain" evidence="1">
    <location>
        <position position="99"/>
    </location>
    <ligand>
        <name>5-phospho-alpha-D-ribose 1-diphosphate</name>
        <dbReference type="ChEBI" id="CHEBI:58017"/>
        <note>ligand shared between dimeric partners</note>
    </ligand>
</feature>
<feature type="binding site" evidence="1">
    <location>
        <position position="102"/>
    </location>
    <ligand>
        <name>5-phospho-alpha-D-ribose 1-diphosphate</name>
        <dbReference type="ChEBI" id="CHEBI:58017"/>
        <note>ligand shared between dimeric partners</note>
    </ligand>
</feature>
<feature type="binding site" evidence="1">
    <location>
        <position position="104"/>
    </location>
    <ligand>
        <name>5-phospho-alpha-D-ribose 1-diphosphate</name>
        <dbReference type="ChEBI" id="CHEBI:58017"/>
        <note>ligand shared between dimeric partners</note>
    </ligand>
</feature>
<feature type="binding site" description="in other chain" evidence="1">
    <location>
        <begin position="128"/>
        <end position="136"/>
    </location>
    <ligand>
        <name>5-phospho-alpha-D-ribose 1-diphosphate</name>
        <dbReference type="ChEBI" id="CHEBI:58017"/>
        <note>ligand shared between dimeric partners</note>
    </ligand>
</feature>
<feature type="binding site" evidence="1">
    <location>
        <position position="132"/>
    </location>
    <ligand>
        <name>orotate</name>
        <dbReference type="ChEBI" id="CHEBI:30839"/>
    </ligand>
</feature>
<feature type="binding site" evidence="1">
    <location>
        <position position="160"/>
    </location>
    <ligand>
        <name>orotate</name>
        <dbReference type="ChEBI" id="CHEBI:30839"/>
    </ligand>
</feature>
<comment type="function">
    <text evidence="1">Catalyzes the transfer of a ribosyl phosphate group from 5-phosphoribose 1-diphosphate to orotate, leading to the formation of orotidine monophosphate (OMP).</text>
</comment>
<comment type="catalytic activity">
    <reaction evidence="1">
        <text>orotidine 5'-phosphate + diphosphate = orotate + 5-phospho-alpha-D-ribose 1-diphosphate</text>
        <dbReference type="Rhea" id="RHEA:10380"/>
        <dbReference type="ChEBI" id="CHEBI:30839"/>
        <dbReference type="ChEBI" id="CHEBI:33019"/>
        <dbReference type="ChEBI" id="CHEBI:57538"/>
        <dbReference type="ChEBI" id="CHEBI:58017"/>
        <dbReference type="EC" id="2.4.2.10"/>
    </reaction>
</comment>
<comment type="cofactor">
    <cofactor evidence="1">
        <name>Mg(2+)</name>
        <dbReference type="ChEBI" id="CHEBI:18420"/>
    </cofactor>
</comment>
<comment type="pathway">
    <text evidence="1">Pyrimidine metabolism; UMP biosynthesis via de novo pathway; UMP from orotate: step 1/2.</text>
</comment>
<comment type="subunit">
    <text evidence="1">Homodimer.</text>
</comment>
<comment type="similarity">
    <text evidence="1">Belongs to the purine/pyrimidine phosphoribosyltransferase family. PyrE subfamily.</text>
</comment>
<evidence type="ECO:0000255" key="1">
    <source>
        <dbReference type="HAMAP-Rule" id="MF_01208"/>
    </source>
</evidence>
<reference key="1">
    <citation type="submission" date="2006-03" db="EMBL/GenBank/DDBJ databases">
        <title>Complete sequence of Rhodopseudomonas palustris BisB18.</title>
        <authorList>
            <consortium name="US DOE Joint Genome Institute"/>
            <person name="Copeland A."/>
            <person name="Lucas S."/>
            <person name="Lapidus A."/>
            <person name="Barry K."/>
            <person name="Detter J.C."/>
            <person name="Glavina del Rio T."/>
            <person name="Hammon N."/>
            <person name="Israni S."/>
            <person name="Dalin E."/>
            <person name="Tice H."/>
            <person name="Pitluck S."/>
            <person name="Chain P."/>
            <person name="Malfatti S."/>
            <person name="Shin M."/>
            <person name="Vergez L."/>
            <person name="Schmutz J."/>
            <person name="Larimer F."/>
            <person name="Land M."/>
            <person name="Hauser L."/>
            <person name="Pelletier D.A."/>
            <person name="Kyrpides N."/>
            <person name="Anderson I."/>
            <person name="Oda Y."/>
            <person name="Harwood C.S."/>
            <person name="Richardson P."/>
        </authorList>
    </citation>
    <scope>NUCLEOTIDE SEQUENCE [LARGE SCALE GENOMIC DNA]</scope>
    <source>
        <strain>BisB18</strain>
    </source>
</reference>
<organism>
    <name type="scientific">Rhodopseudomonas palustris (strain BisB18)</name>
    <dbReference type="NCBI Taxonomy" id="316056"/>
    <lineage>
        <taxon>Bacteria</taxon>
        <taxon>Pseudomonadati</taxon>
        <taxon>Pseudomonadota</taxon>
        <taxon>Alphaproteobacteria</taxon>
        <taxon>Hyphomicrobiales</taxon>
        <taxon>Nitrobacteraceae</taxon>
        <taxon>Rhodopseudomonas</taxon>
    </lineage>
</organism>
<gene>
    <name evidence="1" type="primary">pyrE</name>
    <name type="ordered locus">RPC_4858</name>
</gene>
<protein>
    <recommendedName>
        <fullName evidence="1">Orotate phosphoribosyltransferase</fullName>
        <shortName evidence="1">OPRT</shortName>
        <shortName evidence="1">OPRTase</shortName>
        <ecNumber evidence="1">2.4.2.10</ecNumber>
    </recommendedName>
</protein>
<name>PYRE_RHOPB</name>
<proteinExistence type="inferred from homology"/>
<accession>Q20WV6</accession>